<gene>
    <name type="primary">rpl15e</name>
    <name type="ordered locus">MJ0983</name>
</gene>
<accession>P54060</accession>
<protein>
    <recommendedName>
        <fullName evidence="2">Large ribosomal subunit protein eL15</fullName>
    </recommendedName>
    <alternativeName>
        <fullName>50S ribosomal protein L15e</fullName>
    </alternativeName>
</protein>
<proteinExistence type="inferred from homology"/>
<comment type="similarity">
    <text evidence="2">Belongs to the eukaryotic ribosomal protein eL15 family.</text>
</comment>
<evidence type="ECO:0000256" key="1">
    <source>
        <dbReference type="SAM" id="MobiDB-lite"/>
    </source>
</evidence>
<evidence type="ECO:0000305" key="2"/>
<keyword id="KW-1185">Reference proteome</keyword>
<keyword id="KW-0687">Ribonucleoprotein</keyword>
<keyword id="KW-0689">Ribosomal protein</keyword>
<reference key="1">
    <citation type="journal article" date="1996" name="Science">
        <title>Complete genome sequence of the methanogenic archaeon, Methanococcus jannaschii.</title>
        <authorList>
            <person name="Bult C.J."/>
            <person name="White O."/>
            <person name="Olsen G.J."/>
            <person name="Zhou L."/>
            <person name="Fleischmann R.D."/>
            <person name="Sutton G.G."/>
            <person name="Blake J.A."/>
            <person name="FitzGerald L.M."/>
            <person name="Clayton R.A."/>
            <person name="Gocayne J.D."/>
            <person name="Kerlavage A.R."/>
            <person name="Dougherty B.A."/>
            <person name="Tomb J.-F."/>
            <person name="Adams M.D."/>
            <person name="Reich C.I."/>
            <person name="Overbeek R."/>
            <person name="Kirkness E.F."/>
            <person name="Weinstock K.G."/>
            <person name="Merrick J.M."/>
            <person name="Glodek A."/>
            <person name="Scott J.L."/>
            <person name="Geoghagen N.S.M."/>
            <person name="Weidman J.F."/>
            <person name="Fuhrmann J.L."/>
            <person name="Nguyen D."/>
            <person name="Utterback T.R."/>
            <person name="Kelley J.M."/>
            <person name="Peterson J.D."/>
            <person name="Sadow P.W."/>
            <person name="Hanna M.C."/>
            <person name="Cotton M.D."/>
            <person name="Roberts K.M."/>
            <person name="Hurst M.A."/>
            <person name="Kaine B.P."/>
            <person name="Borodovsky M."/>
            <person name="Klenk H.-P."/>
            <person name="Fraser C.M."/>
            <person name="Smith H.O."/>
            <person name="Woese C.R."/>
            <person name="Venter J.C."/>
        </authorList>
    </citation>
    <scope>NUCLEOTIDE SEQUENCE [LARGE SCALE GENOMIC DNA]</scope>
    <source>
        <strain>ATCC 43067 / DSM 2661 / JAL-1 / JCM 10045 / NBRC 100440</strain>
    </source>
</reference>
<organism>
    <name type="scientific">Methanocaldococcus jannaschii (strain ATCC 43067 / DSM 2661 / JAL-1 / JCM 10045 / NBRC 100440)</name>
    <name type="common">Methanococcus jannaschii</name>
    <dbReference type="NCBI Taxonomy" id="243232"/>
    <lineage>
        <taxon>Archaea</taxon>
        <taxon>Methanobacteriati</taxon>
        <taxon>Methanobacteriota</taxon>
        <taxon>Methanomada group</taxon>
        <taxon>Methanococci</taxon>
        <taxon>Methanococcales</taxon>
        <taxon>Methanocaldococcaceae</taxon>
        <taxon>Methanocaldococcus</taxon>
    </lineage>
</organism>
<sequence>MGIYKYIREAWKRPKESYVRQLLWERLQQWRREPAVVRIERPTRLDRARALGYKPKQGIIVVRVRVRRGGLRKPRPKNSKKPATLGVNKITMGKSIQRIAEERAARKYPNMEVLNSYWVGEDGKHKWYEVILVDPYHPAIKADPQLNWLCTGKHRGRAFRGLTSAGKKGRGLRNKGIGAEKVRPSIRAHGRRGK</sequence>
<dbReference type="EMBL" id="L77117">
    <property type="protein sequence ID" value="AAB98986.1"/>
    <property type="molecule type" value="Genomic_DNA"/>
</dbReference>
<dbReference type="PIR" id="G64422">
    <property type="entry name" value="G64422"/>
</dbReference>
<dbReference type="RefSeq" id="WP_010870497.1">
    <property type="nucleotide sequence ID" value="NC_000909.1"/>
</dbReference>
<dbReference type="SMR" id="P54060"/>
<dbReference type="FunCoup" id="P54060">
    <property type="interactions" value="173"/>
</dbReference>
<dbReference type="STRING" id="243232.MJ_0983"/>
<dbReference type="PaxDb" id="243232-MJ_0983"/>
<dbReference type="EnsemblBacteria" id="AAB98986">
    <property type="protein sequence ID" value="AAB98986"/>
    <property type="gene ID" value="MJ_0983"/>
</dbReference>
<dbReference type="GeneID" id="8805475"/>
<dbReference type="KEGG" id="mja:MJ_0983"/>
<dbReference type="eggNOG" id="arCOG04209">
    <property type="taxonomic scope" value="Archaea"/>
</dbReference>
<dbReference type="HOGENOM" id="CLU_080796_1_0_2"/>
<dbReference type="InParanoid" id="P54060"/>
<dbReference type="OrthoDB" id="8183at2157"/>
<dbReference type="PhylomeDB" id="P54060"/>
<dbReference type="Proteomes" id="UP000000805">
    <property type="component" value="Chromosome"/>
</dbReference>
<dbReference type="GO" id="GO:0022625">
    <property type="term" value="C:cytosolic large ribosomal subunit"/>
    <property type="evidence" value="ECO:0000318"/>
    <property type="project" value="GO_Central"/>
</dbReference>
<dbReference type="GO" id="GO:0003723">
    <property type="term" value="F:RNA binding"/>
    <property type="evidence" value="ECO:0000318"/>
    <property type="project" value="GO_Central"/>
</dbReference>
<dbReference type="GO" id="GO:0003735">
    <property type="term" value="F:structural constituent of ribosome"/>
    <property type="evidence" value="ECO:0000318"/>
    <property type="project" value="GO_Central"/>
</dbReference>
<dbReference type="GO" id="GO:0002181">
    <property type="term" value="P:cytoplasmic translation"/>
    <property type="evidence" value="ECO:0000318"/>
    <property type="project" value="GO_Central"/>
</dbReference>
<dbReference type="FunFam" id="3.40.1120.10:FF:000002">
    <property type="entry name" value="50S ribosomal protein L15e"/>
    <property type="match status" value="1"/>
</dbReference>
<dbReference type="Gene3D" id="3.40.1120.10">
    <property type="entry name" value="Ribosomal protein l15e"/>
    <property type="match status" value="1"/>
</dbReference>
<dbReference type="HAMAP" id="MF_00256">
    <property type="entry name" value="Ribosomal_eL15"/>
    <property type="match status" value="1"/>
</dbReference>
<dbReference type="InterPro" id="IPR024794">
    <property type="entry name" value="Rbsml_eL15_core_dom_sf"/>
</dbReference>
<dbReference type="InterPro" id="IPR000439">
    <property type="entry name" value="Ribosomal_eL15"/>
</dbReference>
<dbReference type="InterPro" id="IPR020926">
    <property type="entry name" value="Ribosomal_eL15_arc"/>
</dbReference>
<dbReference type="InterPro" id="IPR020925">
    <property type="entry name" value="Ribosomal_eL15_CS"/>
</dbReference>
<dbReference type="InterPro" id="IPR012678">
    <property type="entry name" value="Ribosomal_uL23/eL15/eS24_sf"/>
</dbReference>
<dbReference type="NCBIfam" id="NF003269">
    <property type="entry name" value="PRK04243.1"/>
    <property type="match status" value="1"/>
</dbReference>
<dbReference type="PANTHER" id="PTHR11847:SF4">
    <property type="entry name" value="LARGE RIBOSOMAL SUBUNIT PROTEIN EL15"/>
    <property type="match status" value="1"/>
</dbReference>
<dbReference type="PANTHER" id="PTHR11847">
    <property type="entry name" value="RIBOSOMAL PROTEIN L15"/>
    <property type="match status" value="1"/>
</dbReference>
<dbReference type="Pfam" id="PF00827">
    <property type="entry name" value="Ribosomal_L15e"/>
    <property type="match status" value="1"/>
</dbReference>
<dbReference type="SMART" id="SM01384">
    <property type="entry name" value="Ribosomal_L15e"/>
    <property type="match status" value="1"/>
</dbReference>
<dbReference type="SUPFAM" id="SSF54189">
    <property type="entry name" value="Ribosomal proteins S24e, L23 and L15e"/>
    <property type="match status" value="1"/>
</dbReference>
<dbReference type="PROSITE" id="PS01194">
    <property type="entry name" value="RIBOSOMAL_L15E"/>
    <property type="match status" value="1"/>
</dbReference>
<name>RL15E_METJA</name>
<feature type="chain" id="PRO_0000127573" description="Large ribosomal subunit protein eL15">
    <location>
        <begin position="1"/>
        <end position="194"/>
    </location>
</feature>
<feature type="region of interest" description="Disordered" evidence="1">
    <location>
        <begin position="164"/>
        <end position="194"/>
    </location>
</feature>
<feature type="compositionally biased region" description="Basic residues" evidence="1">
    <location>
        <begin position="184"/>
        <end position="194"/>
    </location>
</feature>